<proteinExistence type="evidence at protein level"/>
<evidence type="ECO:0000305" key="1"/>
<feature type="chain" id="PRO_0000057959" description="30 kDa non-secretory protein 2">
    <location>
        <begin position="1"/>
        <end position="19" status="greater than"/>
    </location>
</feature>
<feature type="non-terminal residue">
    <location>
        <position position="19"/>
    </location>
</feature>
<comment type="similarity">
    <text evidence="1">To C.elegans F20A1.4 and H.influenzae HI_0967.</text>
</comment>
<comment type="caution">
    <text evidence="1">We are unable to find this protein in the translation of the genome of strain H37Rv.</text>
</comment>
<accession>P81136</accession>
<organism>
    <name type="scientific">Mycobacterium tuberculosis (strain ATCC 25618 / H37Rv)</name>
    <dbReference type="NCBI Taxonomy" id="83332"/>
    <lineage>
        <taxon>Bacteria</taxon>
        <taxon>Bacillati</taxon>
        <taxon>Actinomycetota</taxon>
        <taxon>Actinomycetes</taxon>
        <taxon>Mycobacteriales</taxon>
        <taxon>Mycobacteriaceae</taxon>
        <taxon>Mycobacterium</taxon>
        <taxon>Mycobacterium tuberculosis complex</taxon>
    </lineage>
</organism>
<name>NS2_MYCTU</name>
<keyword id="KW-0903">Direct protein sequencing</keyword>
<sequence length="19" mass="2212">MDETIVTDKGVAEFSFFKF</sequence>
<reference key="1">
    <citation type="submission" date="1997-12" db="UniProtKB">
        <authorList>
            <person name="Prasad H.K."/>
            <person name="Annapurna P.S."/>
        </authorList>
    </citation>
    <scope>PROTEIN SEQUENCE</scope>
    <source>
        <strain>ATCC 25618 / H37Rv</strain>
    </source>
</reference>
<protein>
    <recommendedName>
        <fullName>30 kDa non-secretory protein 2</fullName>
    </recommendedName>
</protein>